<reference key="1">
    <citation type="journal article" date="2009" name="Genome Biol.">
        <title>A whole-genome assembly of the domestic cow, Bos taurus.</title>
        <authorList>
            <person name="Zimin A.V."/>
            <person name="Delcher A.L."/>
            <person name="Florea L."/>
            <person name="Kelley D.R."/>
            <person name="Schatz M.C."/>
            <person name="Puiu D."/>
            <person name="Hanrahan F."/>
            <person name="Pertea G."/>
            <person name="Van Tassell C.P."/>
            <person name="Sonstegard T.S."/>
            <person name="Marcais G."/>
            <person name="Roberts M."/>
            <person name="Subramanian P."/>
            <person name="Yorke J.A."/>
            <person name="Salzberg S.L."/>
        </authorList>
    </citation>
    <scope>NUCLEOTIDE SEQUENCE [LARGE SCALE GENOMIC DNA]</scope>
    <source>
        <strain>Hereford</strain>
    </source>
</reference>
<reference key="2">
    <citation type="submission" date="2006-08" db="EMBL/GenBank/DDBJ databases">
        <authorList>
            <consortium name="NIH - Mammalian Gene Collection (MGC) project"/>
        </authorList>
    </citation>
    <scope>NUCLEOTIDE SEQUENCE [LARGE SCALE MRNA] (ISOFORM 2)</scope>
    <source>
        <strain>Hereford</strain>
        <tissue>Hypothalamus</tissue>
    </source>
</reference>
<evidence type="ECO:0000250" key="1">
    <source>
        <dbReference type="UniProtKB" id="Q9Y3A0"/>
    </source>
</evidence>
<evidence type="ECO:0000255" key="2"/>
<evidence type="ECO:0000255" key="3">
    <source>
        <dbReference type="HAMAP-Rule" id="MF_03111"/>
    </source>
</evidence>
<evidence type="ECO:0000305" key="4"/>
<comment type="function">
    <text evidence="3">Lyase that catalyzes the C1-decarboxylation of 4-hydroxy-3-methoxy-5-(all-trans-decaprenyl)benzoic acid into 2-methoxy-6-(all-trans-decaprenyl)phenol during ubiquinone biosynthesis.</text>
</comment>
<comment type="catalytic activity">
    <reaction evidence="3">
        <text>4-hydroxy-3-methoxy-5-(all-trans-decaprenyl)benzoate + H(+) = 2-methoxy-6-(all-trans-decaprenyl)phenol + CO2</text>
        <dbReference type="Rhea" id="RHEA:81275"/>
        <dbReference type="ChEBI" id="CHEBI:15378"/>
        <dbReference type="ChEBI" id="CHEBI:16526"/>
        <dbReference type="ChEBI" id="CHEBI:50774"/>
        <dbReference type="ChEBI" id="CHEBI:62796"/>
        <dbReference type="EC" id="4.1.1.130"/>
    </reaction>
</comment>
<comment type="cofactor">
    <cofactor evidence="3">
        <name>Zn(2+)</name>
        <dbReference type="ChEBI" id="CHEBI:29105"/>
    </cofactor>
</comment>
<comment type="pathway">
    <text evidence="3">Cofactor biosynthesis; ubiquinone biosynthesis.</text>
</comment>
<comment type="subunit">
    <text evidence="3">Component of a multi-subunit COQ enzyme complex, composed of at least COQ3, COQ4, COQ5, COQ6, COQ7 and COQ9.</text>
</comment>
<comment type="subcellular location">
    <subcellularLocation>
        <location evidence="3">Mitochondrion inner membrane</location>
        <topology evidence="3">Peripheral membrane protein</topology>
        <orientation evidence="3">Matrix side</orientation>
    </subcellularLocation>
</comment>
<comment type="alternative products">
    <event type="alternative splicing"/>
    <isoform>
        <id>Q05B52-1</id>
        <name>1</name>
        <sequence type="displayed"/>
    </isoform>
    <isoform>
        <id>Q05B52-2</id>
        <name>2</name>
        <sequence type="described" ref="VSP_062530 VSP_062531"/>
    </isoform>
</comment>
<comment type="similarity">
    <text evidence="4">Belongs to the COQ4 family.</text>
</comment>
<feature type="transit peptide" description="Mitochondrion" evidence="2">
    <location>
        <begin position="1"/>
        <end position="29"/>
    </location>
</feature>
<feature type="chain" id="PRO_0000388052" description="Ubiquinone biosynthesis protein COQ4 homolog, mitochondrial">
    <location>
        <begin position="30"/>
        <end position="265"/>
    </location>
</feature>
<feature type="binding site" evidence="3">
    <location>
        <position position="163"/>
    </location>
    <ligand>
        <name>Zn(2+)</name>
        <dbReference type="ChEBI" id="CHEBI:29105"/>
    </ligand>
</feature>
<feature type="binding site" evidence="3">
    <location>
        <position position="164"/>
    </location>
    <ligand>
        <name>Zn(2+)</name>
        <dbReference type="ChEBI" id="CHEBI:29105"/>
    </ligand>
</feature>
<feature type="binding site" evidence="3">
    <location>
        <position position="167"/>
    </location>
    <ligand>
        <name>Zn(2+)</name>
        <dbReference type="ChEBI" id="CHEBI:29105"/>
    </ligand>
</feature>
<feature type="binding site" evidence="3">
    <location>
        <position position="179"/>
    </location>
    <ligand>
        <name>Zn(2+)</name>
        <dbReference type="ChEBI" id="CHEBI:29105"/>
    </ligand>
</feature>
<feature type="modified residue" description="Phosphoserine" evidence="1">
    <location>
        <position position="108"/>
    </location>
</feature>
<feature type="splice variant" id="VSP_062530" description="In isoform 2.">
    <original>RVSPDTRAPTRFVDDEE</original>
    <variation>VASGRGMTVCTEDFIQC</variation>
    <location>
        <begin position="135"/>
        <end position="151"/>
    </location>
</feature>
<feature type="splice variant" id="VSP_062531" description="In isoform 2.">
    <location>
        <begin position="152"/>
        <end position="265"/>
    </location>
</feature>
<feature type="sequence conflict" description="In Ref. 2; AAI22806." evidence="4" ref="2">
    <original>Y</original>
    <variation>C</variation>
    <location>
        <position position="13"/>
    </location>
</feature>
<feature type="sequence conflict" description="In Ref. 2; AAI22806." evidence="4" ref="2">
    <original>R</original>
    <variation>C</variation>
    <location>
        <position position="125"/>
    </location>
</feature>
<dbReference type="EC" id="4.1.1.130" evidence="3"/>
<dbReference type="EMBL" id="BC122805">
    <property type="protein sequence ID" value="AAI22806.1"/>
    <property type="molecule type" value="mRNA"/>
</dbReference>
<dbReference type="RefSeq" id="NP_001077141.1">
    <property type="nucleotide sequence ID" value="NM_001083672.2"/>
</dbReference>
<dbReference type="RefSeq" id="NP_001421674.1">
    <molecule id="Q05B52-1"/>
    <property type="nucleotide sequence ID" value="NM_001434745.1"/>
</dbReference>
<dbReference type="RefSeq" id="NP_001421675.1">
    <molecule id="Q05B52-1"/>
    <property type="nucleotide sequence ID" value="NM_001434746.1"/>
</dbReference>
<dbReference type="RefSeq" id="XP_005213303.1">
    <property type="nucleotide sequence ID" value="XM_005213246.3"/>
</dbReference>
<dbReference type="RefSeq" id="XP_010808715.1">
    <property type="nucleotide sequence ID" value="XM_010810413.2"/>
</dbReference>
<dbReference type="FunCoup" id="Q05B52">
    <property type="interactions" value="1136"/>
</dbReference>
<dbReference type="STRING" id="9913.ENSBTAP00000053835"/>
<dbReference type="PaxDb" id="9913-ENSBTAP00000053835"/>
<dbReference type="Ensembl" id="ENSBTAT00000061485.4">
    <molecule id="Q05B52-1"/>
    <property type="protein sequence ID" value="ENSBTAP00000053835.3"/>
    <property type="gene ID" value="ENSBTAG00000004664.8"/>
</dbReference>
<dbReference type="GeneID" id="511987"/>
<dbReference type="KEGG" id="bta:511987"/>
<dbReference type="CTD" id="51117"/>
<dbReference type="VEuPathDB" id="HostDB:ENSBTAG00000004664"/>
<dbReference type="VGNC" id="VGNC:59211">
    <property type="gene designation" value="COQ4"/>
</dbReference>
<dbReference type="eggNOG" id="KOG3244">
    <property type="taxonomic scope" value="Eukaryota"/>
</dbReference>
<dbReference type="GeneTree" id="ENSGT00390000003828"/>
<dbReference type="HOGENOM" id="CLU_061241_2_1_1"/>
<dbReference type="InParanoid" id="Q05B52"/>
<dbReference type="OMA" id="TVYWEER"/>
<dbReference type="OrthoDB" id="4249at2759"/>
<dbReference type="TreeFam" id="TF314625"/>
<dbReference type="Reactome" id="R-BTA-2142789">
    <property type="pathway name" value="Ubiquinol biosynthesis"/>
</dbReference>
<dbReference type="UniPathway" id="UPA00232"/>
<dbReference type="Proteomes" id="UP000009136">
    <property type="component" value="Chromosome 11"/>
</dbReference>
<dbReference type="Bgee" id="ENSBTAG00000004664">
    <property type="expression patterns" value="Expressed in corpus luteum and 107 other cell types or tissues"/>
</dbReference>
<dbReference type="GO" id="GO:0031314">
    <property type="term" value="C:extrinsic component of mitochondrial inner membrane"/>
    <property type="evidence" value="ECO:0007669"/>
    <property type="project" value="UniProtKB-UniRule"/>
</dbReference>
<dbReference type="GO" id="GO:0005743">
    <property type="term" value="C:mitochondrial inner membrane"/>
    <property type="evidence" value="ECO:0007669"/>
    <property type="project" value="UniProtKB-SubCell"/>
</dbReference>
<dbReference type="GO" id="GO:0005739">
    <property type="term" value="C:mitochondrion"/>
    <property type="evidence" value="ECO:0000318"/>
    <property type="project" value="GO_Central"/>
</dbReference>
<dbReference type="GO" id="GO:0120539">
    <property type="term" value="F:4-hydroxy-3-methoxy-5-polyprenylbenzoate decarboxylase activity"/>
    <property type="evidence" value="ECO:0000250"/>
    <property type="project" value="UniProtKB"/>
</dbReference>
<dbReference type="GO" id="GO:0006744">
    <property type="term" value="P:ubiquinone biosynthetic process"/>
    <property type="evidence" value="ECO:0007669"/>
    <property type="project" value="UniProtKB-UniRule"/>
</dbReference>
<dbReference type="HAMAP" id="MF_03111">
    <property type="entry name" value="Coq4"/>
    <property type="match status" value="1"/>
</dbReference>
<dbReference type="InterPro" id="IPR007715">
    <property type="entry name" value="Coq4"/>
</dbReference>
<dbReference type="InterPro" id="IPR027540">
    <property type="entry name" value="Coq4_euk"/>
</dbReference>
<dbReference type="PANTHER" id="PTHR12922">
    <property type="entry name" value="UBIQUINONE BIOSYNTHESIS PROTEIN"/>
    <property type="match status" value="1"/>
</dbReference>
<dbReference type="PANTHER" id="PTHR12922:SF7">
    <property type="entry name" value="UBIQUINONE BIOSYNTHESIS PROTEIN COQ4 HOMOLOG, MITOCHONDRIAL"/>
    <property type="match status" value="1"/>
</dbReference>
<dbReference type="Pfam" id="PF05019">
    <property type="entry name" value="Coq4"/>
    <property type="match status" value="1"/>
</dbReference>
<organism>
    <name type="scientific">Bos taurus</name>
    <name type="common">Bovine</name>
    <dbReference type="NCBI Taxonomy" id="9913"/>
    <lineage>
        <taxon>Eukaryota</taxon>
        <taxon>Metazoa</taxon>
        <taxon>Chordata</taxon>
        <taxon>Craniata</taxon>
        <taxon>Vertebrata</taxon>
        <taxon>Euteleostomi</taxon>
        <taxon>Mammalia</taxon>
        <taxon>Eutheria</taxon>
        <taxon>Laurasiatheria</taxon>
        <taxon>Artiodactyla</taxon>
        <taxon>Ruminantia</taxon>
        <taxon>Pecora</taxon>
        <taxon>Bovidae</taxon>
        <taxon>Bovinae</taxon>
        <taxon>Bos</taxon>
    </lineage>
</organism>
<keyword id="KW-0025">Alternative splicing</keyword>
<keyword id="KW-0456">Lyase</keyword>
<keyword id="KW-0472">Membrane</keyword>
<keyword id="KW-0479">Metal-binding</keyword>
<keyword id="KW-0496">Mitochondrion</keyword>
<keyword id="KW-0999">Mitochondrion inner membrane</keyword>
<keyword id="KW-0597">Phosphoprotein</keyword>
<keyword id="KW-1185">Reference proteome</keyword>
<keyword id="KW-0809">Transit peptide</keyword>
<keyword id="KW-0831">Ubiquinone biosynthesis</keyword>
<keyword id="KW-0862">Zinc</keyword>
<gene>
    <name type="primary">COQ4</name>
</gene>
<protein>
    <recommendedName>
        <fullName>Ubiquinone biosynthesis protein COQ4 homolog, mitochondrial</fullName>
    </recommendedName>
    <alternativeName>
        <fullName>4-hydroxy-3-methoxy-5-polyprenylbenzoate decarboxylase</fullName>
        <ecNumber evidence="3">4.1.1.130</ecNumber>
    </alternativeName>
    <alternativeName>
        <fullName>Coenzyme Q biosynthesis protein 4 homolog</fullName>
    </alternativeName>
</protein>
<proteinExistence type="evidence at transcript level"/>
<sequence>MATLLRGVLRPLYAFRGGPGPPAGVPFRAVSHGTGLLYPEHIPTSVLQKVLLAAGSAGMALYDPYRHDMVAVLGETTGRRTLKVLRDQMKRDPEGAQILQERPRISLSTLDMGKLRSLPEGSFGRAYLHFLDVNRVSPDTRAPTRFVDDEELAYVIQRYREIHDMLHALLGMPTNILGEIVVKWFEAVQTGLPMCVLSALFGPIRLSAQSLQLLISELIPWAVENGRRAPCVLNVYYERRWEQPLQALRQELGITEPPLRVEGLV</sequence>
<accession>Q05B52</accession>
<accession>E1BK08</accession>
<name>COQ4_BOVIN</name>